<name>MOAC_SALNS</name>
<dbReference type="EC" id="4.6.1.17" evidence="1"/>
<dbReference type="EMBL" id="CP001113">
    <property type="protein sequence ID" value="ACF62077.1"/>
    <property type="molecule type" value="Genomic_DNA"/>
</dbReference>
<dbReference type="RefSeq" id="WP_000080894.1">
    <property type="nucleotide sequence ID" value="NZ_CCMR01000003.1"/>
</dbReference>
<dbReference type="SMR" id="B4SZK6"/>
<dbReference type="KEGG" id="see:SNSL254_A0867"/>
<dbReference type="HOGENOM" id="CLU_074693_1_1_6"/>
<dbReference type="UniPathway" id="UPA00344"/>
<dbReference type="Proteomes" id="UP000008824">
    <property type="component" value="Chromosome"/>
</dbReference>
<dbReference type="GO" id="GO:0061799">
    <property type="term" value="F:cyclic pyranopterin monophosphate synthase activity"/>
    <property type="evidence" value="ECO:0007669"/>
    <property type="project" value="UniProtKB-UniRule"/>
</dbReference>
<dbReference type="GO" id="GO:0006777">
    <property type="term" value="P:Mo-molybdopterin cofactor biosynthetic process"/>
    <property type="evidence" value="ECO:0007669"/>
    <property type="project" value="UniProtKB-UniRule"/>
</dbReference>
<dbReference type="CDD" id="cd01420">
    <property type="entry name" value="MoaC_PE"/>
    <property type="match status" value="1"/>
</dbReference>
<dbReference type="FunFam" id="3.30.70.640:FF:000001">
    <property type="entry name" value="Cyclic pyranopterin monophosphate synthase"/>
    <property type="match status" value="1"/>
</dbReference>
<dbReference type="Gene3D" id="3.30.70.640">
    <property type="entry name" value="Molybdopterin cofactor biosynthesis C (MoaC) domain"/>
    <property type="match status" value="1"/>
</dbReference>
<dbReference type="HAMAP" id="MF_01224_B">
    <property type="entry name" value="MoaC_B"/>
    <property type="match status" value="1"/>
</dbReference>
<dbReference type="InterPro" id="IPR023045">
    <property type="entry name" value="MoaC"/>
</dbReference>
<dbReference type="InterPro" id="IPR047594">
    <property type="entry name" value="MoaC_bact/euk"/>
</dbReference>
<dbReference type="InterPro" id="IPR036522">
    <property type="entry name" value="MoaC_sf"/>
</dbReference>
<dbReference type="InterPro" id="IPR050105">
    <property type="entry name" value="MoCo_biosynth_MoaA/MoaC"/>
</dbReference>
<dbReference type="InterPro" id="IPR002820">
    <property type="entry name" value="Mopterin_CF_biosynth-C_dom"/>
</dbReference>
<dbReference type="NCBIfam" id="TIGR00581">
    <property type="entry name" value="moaC"/>
    <property type="match status" value="1"/>
</dbReference>
<dbReference type="NCBIfam" id="NF006870">
    <property type="entry name" value="PRK09364.1"/>
    <property type="match status" value="1"/>
</dbReference>
<dbReference type="PANTHER" id="PTHR22960">
    <property type="entry name" value="MOLYBDOPTERIN COFACTOR SYNTHESIS PROTEIN A"/>
    <property type="match status" value="1"/>
</dbReference>
<dbReference type="Pfam" id="PF01967">
    <property type="entry name" value="MoaC"/>
    <property type="match status" value="1"/>
</dbReference>
<dbReference type="SUPFAM" id="SSF55040">
    <property type="entry name" value="Molybdenum cofactor biosynthesis protein C, MoaC"/>
    <property type="match status" value="1"/>
</dbReference>
<keyword id="KW-0456">Lyase</keyword>
<keyword id="KW-0501">Molybdenum cofactor biosynthesis</keyword>
<reference key="1">
    <citation type="journal article" date="2011" name="J. Bacteriol.">
        <title>Comparative genomics of 28 Salmonella enterica isolates: evidence for CRISPR-mediated adaptive sublineage evolution.</title>
        <authorList>
            <person name="Fricke W.F."/>
            <person name="Mammel M.K."/>
            <person name="McDermott P.F."/>
            <person name="Tartera C."/>
            <person name="White D.G."/>
            <person name="Leclerc J.E."/>
            <person name="Ravel J."/>
            <person name="Cebula T.A."/>
        </authorList>
    </citation>
    <scope>NUCLEOTIDE SEQUENCE [LARGE SCALE GENOMIC DNA]</scope>
    <source>
        <strain>SL254</strain>
    </source>
</reference>
<organism>
    <name type="scientific">Salmonella newport (strain SL254)</name>
    <dbReference type="NCBI Taxonomy" id="423368"/>
    <lineage>
        <taxon>Bacteria</taxon>
        <taxon>Pseudomonadati</taxon>
        <taxon>Pseudomonadota</taxon>
        <taxon>Gammaproteobacteria</taxon>
        <taxon>Enterobacterales</taxon>
        <taxon>Enterobacteriaceae</taxon>
        <taxon>Salmonella</taxon>
    </lineage>
</organism>
<sequence length="161" mass="17443">MSQLTHINAAGEAHMVDVSAKAETVREARAEAFVTMRSETLAMIVDGKHHKGDVFATARIAGIQAAKRTWELIPLCHPLLLSKVEIQLQAEPEHNRVRIESLCRLTGKTGVEMEALTAASVAALTIYDMCKAVQKDMVIGPVRLLAKSGGKSGDFKVDAHD</sequence>
<gene>
    <name evidence="1" type="primary">moaC</name>
    <name type="ordered locus">SNSL254_A0867</name>
</gene>
<comment type="function">
    <text evidence="1">Catalyzes the conversion of (8S)-3',8-cyclo-7,8-dihydroguanosine 5'-triphosphate to cyclic pyranopterin monophosphate (cPMP).</text>
</comment>
<comment type="catalytic activity">
    <reaction evidence="1">
        <text>(8S)-3',8-cyclo-7,8-dihydroguanosine 5'-triphosphate = cyclic pyranopterin phosphate + diphosphate</text>
        <dbReference type="Rhea" id="RHEA:49580"/>
        <dbReference type="ChEBI" id="CHEBI:33019"/>
        <dbReference type="ChEBI" id="CHEBI:59648"/>
        <dbReference type="ChEBI" id="CHEBI:131766"/>
        <dbReference type="EC" id="4.6.1.17"/>
    </reaction>
</comment>
<comment type="pathway">
    <text evidence="1">Cofactor biosynthesis; molybdopterin biosynthesis.</text>
</comment>
<comment type="subunit">
    <text evidence="1">Homohexamer; trimer of dimers.</text>
</comment>
<comment type="similarity">
    <text evidence="1">Belongs to the MoaC family.</text>
</comment>
<accession>B4SZK6</accession>
<protein>
    <recommendedName>
        <fullName evidence="1">Cyclic pyranopterin monophosphate synthase</fullName>
        <ecNumber evidence="1">4.6.1.17</ecNumber>
    </recommendedName>
    <alternativeName>
        <fullName evidence="1">Molybdenum cofactor biosynthesis protein C</fullName>
    </alternativeName>
</protein>
<evidence type="ECO:0000255" key="1">
    <source>
        <dbReference type="HAMAP-Rule" id="MF_01224"/>
    </source>
</evidence>
<feature type="chain" id="PRO_1000139294" description="Cyclic pyranopterin monophosphate synthase">
    <location>
        <begin position="1"/>
        <end position="161"/>
    </location>
</feature>
<feature type="active site" evidence="1">
    <location>
        <position position="128"/>
    </location>
</feature>
<feature type="binding site" evidence="1">
    <location>
        <begin position="75"/>
        <end position="77"/>
    </location>
    <ligand>
        <name>substrate</name>
    </ligand>
</feature>
<feature type="binding site" evidence="1">
    <location>
        <begin position="113"/>
        <end position="114"/>
    </location>
    <ligand>
        <name>substrate</name>
    </ligand>
</feature>
<proteinExistence type="inferred from homology"/>